<protein>
    <recommendedName>
        <fullName evidence="10">11-beta-hydroxysteroid dehydrogenase B</fullName>
        <ecNumber evidence="3">1.1.1.146</ecNumber>
    </recommendedName>
    <alternativeName>
        <fullName evidence="10">17-beta-hydroxysteroid dehydrogenase B</fullName>
        <ecNumber evidence="3">1.1.1.-</ecNumber>
    </alternativeName>
    <alternativeName>
        <fullName evidence="8 11">Steroleosin-B</fullName>
    </alternativeName>
</protein>
<evidence type="ECO:0000250" key="1">
    <source>
        <dbReference type="UniProtKB" id="P14061"/>
    </source>
</evidence>
<evidence type="ECO:0000250" key="2">
    <source>
        <dbReference type="UniProtKB" id="P28845"/>
    </source>
</evidence>
<evidence type="ECO:0000250" key="3">
    <source>
        <dbReference type="UniProtKB" id="Q8LKV5"/>
    </source>
</evidence>
<evidence type="ECO:0000250" key="4">
    <source>
        <dbReference type="UniProtKB" id="Q93W57"/>
    </source>
</evidence>
<evidence type="ECO:0000255" key="5"/>
<evidence type="ECO:0000255" key="6">
    <source>
        <dbReference type="PROSITE-ProRule" id="PRU10001"/>
    </source>
</evidence>
<evidence type="ECO:0000269" key="7">
    <source>
    </source>
</evidence>
<evidence type="ECO:0000303" key="8">
    <source>
    </source>
</evidence>
<evidence type="ECO:0000303" key="9">
    <source ref="1"/>
</evidence>
<evidence type="ECO:0000305" key="10"/>
<evidence type="ECO:0000312" key="11">
    <source>
        <dbReference type="EMBL" id="ABS28873.1"/>
    </source>
</evidence>
<proteinExistence type="evidence at protein level"/>
<gene>
    <name evidence="11" type="primary">STO-B</name>
</gene>
<reference evidence="11" key="1">
    <citation type="submission" date="2007-06" db="EMBL/GenBank/DDBJ databases">
        <title>Cloning and characterization of two genes encoding peanut seed steroleosins.</title>
        <authorList>
            <person name="Fu G."/>
            <person name="Li C."/>
            <person name="Wang L."/>
            <person name="Huang S."/>
        </authorList>
    </citation>
    <scope>NUCLEOTIDE SEQUENCE [MRNA]</scope>
    <source>
        <strain evidence="9">cv. Shanyou 523</strain>
    </source>
</reference>
<reference key="2">
    <citation type="journal article" date="2015" name="PLoS ONE">
        <title>Development of a novel strategy to isolate lipophilic allergens (oleosins) from peanuts.</title>
        <authorList>
            <person name="Schwager C."/>
            <person name="Kull S."/>
            <person name="Krause S."/>
            <person name="Schocker F."/>
            <person name="Petersen A."/>
            <person name="Becker W.M."/>
            <person name="Jappe U."/>
        </authorList>
    </citation>
    <scope>PROTEIN SEQUENCE OF 86-92; 114-125; 115-125; 238-252; 253-266; 281-292; 305-313 AND 324-337</scope>
    <scope>SUBCELLULAR LOCATION</scope>
    <scope>TISSUE SPECIFICITY</scope>
    <scope>IDENTIFICATION BY MASS SPECTROMETRY</scope>
    <source>
        <tissue evidence="7">Seed</tissue>
    </source>
</reference>
<name>HSDB_ARAHY</name>
<sequence length="353" mass="39598">MDLINSVLNLFVPPASLITLAFSWPALCFPHACEWLYNTVYGDNMDGKVVIITGASSGIGEQIAYEYALRRACLVLVARREHRLRGIAENARRMGARHVMIVAADVVKEDECRRFVNETINFYGRVDHLVNTVSLGHTFYFEEVTDTSVFPVLLDINFWGNIYPTLVALPYLHRTNGRVIINASVESWLPLPRMSLYAAAKAALVNFYETLRFELRDEVGVTIATHGWIGSEMTSGKFMLEEGAEMQWKEEREMNVIGGPVEEFARLMVAGACRGDAYVKYPSWYDVFLLYRVFAPNVLNWAFRLLIAPQGTKRTSSYVGTGRSLEGRPMLEAPSPRTALLAPYSFSGGGQLS</sequence>
<keyword id="KW-0903">Direct protein sequencing</keyword>
<keyword id="KW-0551">Lipid droplet</keyword>
<keyword id="KW-0472">Membrane</keyword>
<keyword id="KW-0521">NADP</keyword>
<keyword id="KW-0560">Oxidoreductase</keyword>
<keyword id="KW-0735">Signal-anchor</keyword>
<keyword id="KW-0812">Transmembrane</keyword>
<keyword id="KW-1133">Transmembrane helix</keyword>
<dbReference type="EC" id="1.1.1.146" evidence="3"/>
<dbReference type="EC" id="1.1.1.-" evidence="3"/>
<dbReference type="EMBL" id="EF695403">
    <property type="protein sequence ID" value="ABS28873.1"/>
    <property type="molecule type" value="mRNA"/>
</dbReference>
<dbReference type="SMR" id="A7LB59"/>
<dbReference type="GO" id="GO:0005829">
    <property type="term" value="C:cytosol"/>
    <property type="evidence" value="ECO:0007669"/>
    <property type="project" value="TreeGrafter"/>
</dbReference>
<dbReference type="GO" id="GO:0016020">
    <property type="term" value="C:membrane"/>
    <property type="evidence" value="ECO:0007669"/>
    <property type="project" value="UniProtKB-SubCell"/>
</dbReference>
<dbReference type="GO" id="GO:0012511">
    <property type="term" value="C:monolayer-surrounded lipid storage body"/>
    <property type="evidence" value="ECO:0000314"/>
    <property type="project" value="UniProtKB"/>
</dbReference>
<dbReference type="GO" id="GO:0070524">
    <property type="term" value="F:11-beta-hydroxysteroid dehydrogenase (NADP+) activity"/>
    <property type="evidence" value="ECO:0000250"/>
    <property type="project" value="UniProtKB"/>
</dbReference>
<dbReference type="GO" id="GO:0072582">
    <property type="term" value="F:17-beta-hydroxysteroid dehydrogenase (NADP+) activity"/>
    <property type="evidence" value="ECO:0000250"/>
    <property type="project" value="UniProtKB"/>
</dbReference>
<dbReference type="GO" id="GO:0050661">
    <property type="term" value="F:NADP binding"/>
    <property type="evidence" value="ECO:0000250"/>
    <property type="project" value="UniProtKB"/>
</dbReference>
<dbReference type="Gene3D" id="3.40.50.720">
    <property type="entry name" value="NAD(P)-binding Rossmann-like Domain"/>
    <property type="match status" value="1"/>
</dbReference>
<dbReference type="InterPro" id="IPR036291">
    <property type="entry name" value="NAD(P)-bd_dom_sf"/>
</dbReference>
<dbReference type="InterPro" id="IPR020904">
    <property type="entry name" value="Sc_DH/Rdtase_CS"/>
</dbReference>
<dbReference type="InterPro" id="IPR002347">
    <property type="entry name" value="SDR_fam"/>
</dbReference>
<dbReference type="PANTHER" id="PTHR43391:SF14">
    <property type="entry name" value="DEHYDROGENASE_REDUCTASE SDR FAMILY PROTEIN 7-LIKE"/>
    <property type="match status" value="1"/>
</dbReference>
<dbReference type="PANTHER" id="PTHR43391">
    <property type="entry name" value="RETINOL DEHYDROGENASE-RELATED"/>
    <property type="match status" value="1"/>
</dbReference>
<dbReference type="Pfam" id="PF00106">
    <property type="entry name" value="adh_short"/>
    <property type="match status" value="1"/>
</dbReference>
<dbReference type="PRINTS" id="PR00081">
    <property type="entry name" value="GDHRDH"/>
</dbReference>
<dbReference type="SUPFAM" id="SSF51735">
    <property type="entry name" value="NAD(P)-binding Rossmann-fold domains"/>
    <property type="match status" value="1"/>
</dbReference>
<dbReference type="PROSITE" id="PS00061">
    <property type="entry name" value="ADH_SHORT"/>
    <property type="match status" value="1"/>
</dbReference>
<feature type="chain" id="PRO_5002712241" description="11-beta-hydroxysteroid dehydrogenase B">
    <location>
        <begin position="1"/>
        <end position="353"/>
    </location>
</feature>
<feature type="transmembrane region" description="Helical; Signal-anchor for type II membrane protein" evidence="5">
    <location>
        <begin position="10"/>
        <end position="30"/>
    </location>
</feature>
<feature type="short sequence motif" description="Proline-knob" evidence="4">
    <location>
        <begin position="13"/>
        <end position="26"/>
    </location>
</feature>
<feature type="active site" description="Proton acceptor" evidence="6">
    <location>
        <position position="197"/>
    </location>
</feature>
<feature type="binding site" evidence="1">
    <location>
        <begin position="54"/>
        <end position="80"/>
    </location>
    <ligand>
        <name>NADP(+)</name>
        <dbReference type="ChEBI" id="CHEBI:58349"/>
    </ligand>
</feature>
<feature type="binding site" evidence="1">
    <location>
        <position position="105"/>
    </location>
    <ligand>
        <name>NADP(+)</name>
        <dbReference type="ChEBI" id="CHEBI:58349"/>
    </ligand>
</feature>
<feature type="binding site" evidence="2">
    <location>
        <position position="184"/>
    </location>
    <ligand>
        <name>substrate</name>
    </ligand>
</feature>
<feature type="binding site" evidence="2">
    <location>
        <begin position="197"/>
        <end position="201"/>
    </location>
    <ligand>
        <name>NADP(+)</name>
        <dbReference type="ChEBI" id="CHEBI:58349"/>
    </ligand>
</feature>
<feature type="binding site" evidence="1">
    <location>
        <position position="201"/>
    </location>
    <ligand>
        <name>NADP(+)</name>
        <dbReference type="ChEBI" id="CHEBI:58349"/>
    </ligand>
</feature>
<organism evidence="11">
    <name type="scientific">Arachis hypogaea</name>
    <name type="common">Peanut</name>
    <dbReference type="NCBI Taxonomy" id="3818"/>
    <lineage>
        <taxon>Eukaryota</taxon>
        <taxon>Viridiplantae</taxon>
        <taxon>Streptophyta</taxon>
        <taxon>Embryophyta</taxon>
        <taxon>Tracheophyta</taxon>
        <taxon>Spermatophyta</taxon>
        <taxon>Magnoliopsida</taxon>
        <taxon>eudicotyledons</taxon>
        <taxon>Gunneridae</taxon>
        <taxon>Pentapetalae</taxon>
        <taxon>rosids</taxon>
        <taxon>fabids</taxon>
        <taxon>Fabales</taxon>
        <taxon>Fabaceae</taxon>
        <taxon>Papilionoideae</taxon>
        <taxon>50 kb inversion clade</taxon>
        <taxon>dalbergioids sensu lato</taxon>
        <taxon>Dalbergieae</taxon>
        <taxon>Pterocarpus clade</taxon>
        <taxon>Arachis</taxon>
    </lineage>
</organism>
<comment type="function">
    <text evidence="3">Has dehydrogenase activity against 11 beta-hydroxysteroid and 17 beta-hydroxysteroid. May be involved in signal transduction regulated by various sterols.</text>
</comment>
<comment type="catalytic activity">
    <reaction evidence="3">
        <text>an 11beta-hydroxysteroid + NADP(+) = an 11-oxosteroid + NADPH + H(+)</text>
        <dbReference type="Rhea" id="RHEA:11388"/>
        <dbReference type="ChEBI" id="CHEBI:15378"/>
        <dbReference type="ChEBI" id="CHEBI:35346"/>
        <dbReference type="ChEBI" id="CHEBI:47787"/>
        <dbReference type="ChEBI" id="CHEBI:57783"/>
        <dbReference type="ChEBI" id="CHEBI:58349"/>
        <dbReference type="EC" id="1.1.1.146"/>
    </reaction>
</comment>
<comment type="subcellular location">
    <subcellularLocation>
        <location evidence="7">Lipid droplet</location>
    </subcellularLocation>
    <subcellularLocation>
        <location evidence="5">Membrane</location>
        <topology evidence="10">Single-pass type II membrane protein</topology>
    </subcellularLocation>
    <text evidence="10">Surface of oil bodies. Exists at a monolayer lipid/water interface.</text>
</comment>
<comment type="tissue specificity">
    <text evidence="7">Expressed in seeds (at protein level).</text>
</comment>
<comment type="domain">
    <text evidence="4">The proline-knob motif may be involved in the targeting to oil bodies.</text>
</comment>
<comment type="similarity">
    <text evidence="10">Belongs to the short-chain dehydrogenases/reductases (SDR) family.</text>
</comment>
<accession>A7LB59</accession>